<organism>
    <name type="scientific">Ailuropoda melanoleuca</name>
    <name type="common">Giant panda</name>
    <dbReference type="NCBI Taxonomy" id="9646"/>
    <lineage>
        <taxon>Eukaryota</taxon>
        <taxon>Metazoa</taxon>
        <taxon>Chordata</taxon>
        <taxon>Craniata</taxon>
        <taxon>Vertebrata</taxon>
        <taxon>Euteleostomi</taxon>
        <taxon>Mammalia</taxon>
        <taxon>Eutheria</taxon>
        <taxon>Laurasiatheria</taxon>
        <taxon>Carnivora</taxon>
        <taxon>Caniformia</taxon>
        <taxon>Ursidae</taxon>
        <taxon>Ailuropoda</taxon>
    </lineage>
</organism>
<feature type="chain" id="PRO_0000404598" description="Vertnin">
    <location>
        <begin position="1"/>
        <end position="708"/>
    </location>
</feature>
<feature type="region of interest" description="Disordered" evidence="1">
    <location>
        <begin position="473"/>
        <end position="499"/>
    </location>
</feature>
<feature type="region of interest" description="Disordered" evidence="1">
    <location>
        <begin position="561"/>
        <end position="636"/>
    </location>
</feature>
<feature type="compositionally biased region" description="Basic and acidic residues" evidence="1">
    <location>
        <begin position="568"/>
        <end position="582"/>
    </location>
</feature>
<reference key="1">
    <citation type="journal article" date="2010" name="Nature">
        <title>The sequence and de novo assembly of the giant panda genome.</title>
        <authorList>
            <person name="Li R."/>
            <person name="Fan W."/>
            <person name="Tian G."/>
            <person name="Zhu H."/>
            <person name="He L."/>
            <person name="Cai J."/>
            <person name="Huang Q."/>
            <person name="Cai Q."/>
            <person name="Li B."/>
            <person name="Bai Y."/>
            <person name="Zhang Z."/>
            <person name="Zhang Y."/>
            <person name="Wang W."/>
            <person name="Li J."/>
            <person name="Wei F."/>
            <person name="Li H."/>
            <person name="Jian M."/>
            <person name="Li J."/>
            <person name="Zhang Z."/>
            <person name="Nielsen R."/>
            <person name="Li D."/>
            <person name="Gu W."/>
            <person name="Yang Z."/>
            <person name="Xuan Z."/>
            <person name="Ryder O.A."/>
            <person name="Leung F.C."/>
            <person name="Zhou Y."/>
            <person name="Cao J."/>
            <person name="Sun X."/>
            <person name="Fu Y."/>
            <person name="Fang X."/>
            <person name="Guo X."/>
            <person name="Wang B."/>
            <person name="Hou R."/>
            <person name="Shen F."/>
            <person name="Mu B."/>
            <person name="Ni P."/>
            <person name="Lin R."/>
            <person name="Qian W."/>
            <person name="Wang G."/>
            <person name="Yu C."/>
            <person name="Nie W."/>
            <person name="Wang J."/>
            <person name="Wu Z."/>
            <person name="Liang H."/>
            <person name="Min J."/>
            <person name="Wu Q."/>
            <person name="Cheng S."/>
            <person name="Ruan J."/>
            <person name="Wang M."/>
            <person name="Shi Z."/>
            <person name="Wen M."/>
            <person name="Liu B."/>
            <person name="Ren X."/>
            <person name="Zheng H."/>
            <person name="Dong D."/>
            <person name="Cook K."/>
            <person name="Shan G."/>
            <person name="Zhang H."/>
            <person name="Kosiol C."/>
            <person name="Xie X."/>
            <person name="Lu Z."/>
            <person name="Zheng H."/>
            <person name="Li Y."/>
            <person name="Steiner C.C."/>
            <person name="Lam T.T."/>
            <person name="Lin S."/>
            <person name="Zhang Q."/>
            <person name="Li G."/>
            <person name="Tian J."/>
            <person name="Gong T."/>
            <person name="Liu H."/>
            <person name="Zhang D."/>
            <person name="Fang L."/>
            <person name="Ye C."/>
            <person name="Zhang J."/>
            <person name="Hu W."/>
            <person name="Xu A."/>
            <person name="Ren Y."/>
            <person name="Zhang G."/>
            <person name="Bruford M.W."/>
            <person name="Li Q."/>
            <person name="Ma L."/>
            <person name="Guo Y."/>
            <person name="An N."/>
            <person name="Hu Y."/>
            <person name="Zheng Y."/>
            <person name="Shi Y."/>
            <person name="Li Z."/>
            <person name="Liu Q."/>
            <person name="Chen Y."/>
            <person name="Zhao J."/>
            <person name="Qu N."/>
            <person name="Zhao S."/>
            <person name="Tian F."/>
            <person name="Wang X."/>
            <person name="Wang H."/>
            <person name="Xu L."/>
            <person name="Liu X."/>
            <person name="Vinar T."/>
            <person name="Wang Y."/>
            <person name="Lam T.W."/>
            <person name="Yiu S.M."/>
            <person name="Liu S."/>
            <person name="Zhang H."/>
            <person name="Li D."/>
            <person name="Huang Y."/>
            <person name="Wang X."/>
            <person name="Yang G."/>
            <person name="Jiang Z."/>
            <person name="Wang J."/>
            <person name="Qin N."/>
            <person name="Li L."/>
            <person name="Li J."/>
            <person name="Bolund L."/>
            <person name="Kristiansen K."/>
            <person name="Wong G.K."/>
            <person name="Olson M."/>
            <person name="Zhang X."/>
            <person name="Li S."/>
            <person name="Yang H."/>
            <person name="Wang J."/>
            <person name="Wang J."/>
        </authorList>
    </citation>
    <scope>NUCLEOTIDE SEQUENCE [LARGE SCALE GENOMIC DNA]</scope>
</reference>
<proteinExistence type="inferred from homology"/>
<keyword id="KW-1185">Reference proteome</keyword>
<protein>
    <recommendedName>
        <fullName>Vertnin</fullName>
    </recommendedName>
</protein>
<gene>
    <name type="primary">VRTN</name>
    <name type="ORF">PANDA_002667</name>
</gene>
<sequence length="708" mass="78253">MTSREQLVQQVLQELQDAVESEGLEGLVGAALEAKQVLSSFALPTCREGGASPQVLEVDSVALSLYPEDAPRNMLPLACRGEGSLLFEAASVLLWGDVGFSLELRARTVVEMLLHRHYYLQGMIDSKVMLQAVRYSLCSEESPEMTSLPSATLEAIFDADVKATCFPSSFSNVWHLYALASVLQRNIYSIYPMRNLKIRPYFNRVIRPRRCDHVPATLHIMWAGQPLSSHLFRHQYFAPVVGLEEVEADGAPGPAPAPPALAPLPPPAKTLELLNQEPGLSYSHLCERYSVTKSTFYRWRRQSQEHRQKVAARFSAKHFLQDSFHRGGVVPLQQFLQRFPEISRSTYYAWKQELLGSGTCQALAPKEVQVLGELEQLPEEQMAKGLGCSSLAAASPSMVLMQRAKSYLEHCISLNTLVPYRCFKRRFPGISRSTYYNWRRKALRRNPSFKPAPALSTPGAPQPASVPEEALLPWKGEGGEGAGKATAGGPPAPHEFLPPKVPLSRWQRRLRRAARKQVLSGHLPFCRFRLRYPSLSPSTFWVWKSLARGWPRGLSKFQTQAPALGKGGLREAKEKQEKEAGRDVTAAMAPPAGTPLHVGASPGEDPGKAQGGPSGEGAMAQGRPHSRSLSSRPVAEAAVGGGDGQVLVMDMLATTKFKAQAKLFLQKRFQSKSFPSFKEFSALFPLTARSTYYMWKRALYDGLTLVDG</sequence>
<name>VRTN_AILME</name>
<accession>D2GZW6</accession>
<evidence type="ECO:0000256" key="1">
    <source>
        <dbReference type="SAM" id="MobiDB-lite"/>
    </source>
</evidence>
<evidence type="ECO:0000305" key="2"/>
<dbReference type="EMBL" id="GL192398">
    <property type="protein sequence ID" value="EFB27014.1"/>
    <property type="molecule type" value="Genomic_DNA"/>
</dbReference>
<dbReference type="RefSeq" id="XP_002914739.1">
    <property type="nucleotide sequence ID" value="XM_002914693.1"/>
</dbReference>
<dbReference type="Ensembl" id="ENSAMET00000042748.1">
    <property type="protein sequence ID" value="ENSAMEP00000033596.1"/>
    <property type="gene ID" value="ENSAMEG00000027533.1"/>
</dbReference>
<dbReference type="GeneID" id="100471833"/>
<dbReference type="KEGG" id="aml:100471833"/>
<dbReference type="CTD" id="55237"/>
<dbReference type="GeneTree" id="ENSGT00390000007874"/>
<dbReference type="InParanoid" id="D2GZW6"/>
<dbReference type="OrthoDB" id="9869831at2759"/>
<dbReference type="Proteomes" id="UP000008912">
    <property type="component" value="Unassembled WGS sequence"/>
</dbReference>
<dbReference type="GO" id="GO:0000785">
    <property type="term" value="C:chromatin"/>
    <property type="evidence" value="ECO:0007669"/>
    <property type="project" value="TreeGrafter"/>
</dbReference>
<dbReference type="GO" id="GO:0043565">
    <property type="term" value="F:sequence-specific DNA binding"/>
    <property type="evidence" value="ECO:0007669"/>
    <property type="project" value="InterPro"/>
</dbReference>
<dbReference type="GO" id="GO:0006357">
    <property type="term" value="P:regulation of transcription by RNA polymerase II"/>
    <property type="evidence" value="ECO:0007669"/>
    <property type="project" value="TreeGrafter"/>
</dbReference>
<dbReference type="CDD" id="cd22791">
    <property type="entry name" value="OTU_VRTN"/>
    <property type="match status" value="1"/>
</dbReference>
<dbReference type="InterPro" id="IPR010921">
    <property type="entry name" value="Trp_repressor/repl_initiator"/>
</dbReference>
<dbReference type="InterPro" id="IPR038822">
    <property type="entry name" value="Vertnin-like"/>
</dbReference>
<dbReference type="InterPro" id="IPR047273">
    <property type="entry name" value="VRTN_OTU_dom"/>
</dbReference>
<dbReference type="PANTHER" id="PTHR16081">
    <property type="entry name" value="VERTNIN"/>
    <property type="match status" value="1"/>
</dbReference>
<dbReference type="PANTHER" id="PTHR16081:SF0">
    <property type="entry name" value="VERTNIN"/>
    <property type="match status" value="1"/>
</dbReference>
<dbReference type="SUPFAM" id="SSF48295">
    <property type="entry name" value="TrpR-like"/>
    <property type="match status" value="1"/>
</dbReference>
<comment type="similarity">
    <text evidence="2">Belongs to the vertnin family.</text>
</comment>